<sequence>MIDSRFPLIDLHRHLDGNIRPQTILELGQQYRLALPANELEALRPHVQISDSVPDLVSFLQKLDWGVAVLATLDACRRVAYENVEDLKRAGIDYAELRFSPYYMAQRHGLPLQGVVEAIIDGVSAASRDVGVPVKLIGIMSRTFGQEACRQELEALLSGRERIAALDLAGDELGFPGDLFRSHFTRARDAGWHITVHAGEAAGAESIWQAIRELGAERIGHGVNAIQDARLMDYLAEHAIGVEACLTSNLQTSTVPSLAQHPLKHFLQHGIIANLNTDDPAVEGIELRHEYQTAAPAAGLSAEQIRQAQYNGLSMAFLSPAEKQVLRDAKQMC</sequence>
<organism>
    <name type="scientific">Edwardsiella ictaluri (strain 93-146)</name>
    <dbReference type="NCBI Taxonomy" id="634503"/>
    <lineage>
        <taxon>Bacteria</taxon>
        <taxon>Pseudomonadati</taxon>
        <taxon>Pseudomonadota</taxon>
        <taxon>Gammaproteobacteria</taxon>
        <taxon>Enterobacterales</taxon>
        <taxon>Hafniaceae</taxon>
        <taxon>Edwardsiella</taxon>
    </lineage>
</organism>
<gene>
    <name evidence="1" type="primary">add</name>
    <name type="ordered locus">NT01EI_2081</name>
</gene>
<dbReference type="EC" id="3.5.4.4" evidence="1"/>
<dbReference type="EMBL" id="CP001600">
    <property type="protein sequence ID" value="ACR69257.1"/>
    <property type="molecule type" value="Genomic_DNA"/>
</dbReference>
<dbReference type="RefSeq" id="WP_015871388.1">
    <property type="nucleotide sequence ID" value="NZ_CP169062.1"/>
</dbReference>
<dbReference type="SMR" id="C5BDE0"/>
<dbReference type="STRING" id="67780.B6E78_03020"/>
<dbReference type="GeneID" id="69539011"/>
<dbReference type="KEGG" id="eic:NT01EI_2081"/>
<dbReference type="PATRIC" id="fig|634503.3.peg.1858"/>
<dbReference type="HOGENOM" id="CLU_039228_0_2_6"/>
<dbReference type="OrthoDB" id="105475at2"/>
<dbReference type="Proteomes" id="UP000001485">
    <property type="component" value="Chromosome"/>
</dbReference>
<dbReference type="GO" id="GO:0005829">
    <property type="term" value="C:cytosol"/>
    <property type="evidence" value="ECO:0007669"/>
    <property type="project" value="TreeGrafter"/>
</dbReference>
<dbReference type="GO" id="GO:0046936">
    <property type="term" value="F:2'-deoxyadenosine deaminase activity"/>
    <property type="evidence" value="ECO:0007669"/>
    <property type="project" value="RHEA"/>
</dbReference>
<dbReference type="GO" id="GO:0004000">
    <property type="term" value="F:adenosine deaminase activity"/>
    <property type="evidence" value="ECO:0007669"/>
    <property type="project" value="UniProtKB-UniRule"/>
</dbReference>
<dbReference type="GO" id="GO:0008270">
    <property type="term" value="F:zinc ion binding"/>
    <property type="evidence" value="ECO:0007669"/>
    <property type="project" value="UniProtKB-UniRule"/>
</dbReference>
<dbReference type="GO" id="GO:0006154">
    <property type="term" value="P:adenosine catabolic process"/>
    <property type="evidence" value="ECO:0007669"/>
    <property type="project" value="TreeGrafter"/>
</dbReference>
<dbReference type="GO" id="GO:0043103">
    <property type="term" value="P:hypoxanthine salvage"/>
    <property type="evidence" value="ECO:0007669"/>
    <property type="project" value="TreeGrafter"/>
</dbReference>
<dbReference type="GO" id="GO:0046103">
    <property type="term" value="P:inosine biosynthetic process"/>
    <property type="evidence" value="ECO:0007669"/>
    <property type="project" value="TreeGrafter"/>
</dbReference>
<dbReference type="GO" id="GO:0009117">
    <property type="term" value="P:nucleotide metabolic process"/>
    <property type="evidence" value="ECO:0007669"/>
    <property type="project" value="UniProtKB-KW"/>
</dbReference>
<dbReference type="GO" id="GO:0009168">
    <property type="term" value="P:purine ribonucleoside monophosphate biosynthetic process"/>
    <property type="evidence" value="ECO:0007669"/>
    <property type="project" value="UniProtKB-UniRule"/>
</dbReference>
<dbReference type="FunFam" id="3.20.20.140:FF:000009">
    <property type="entry name" value="Adenosine deaminase"/>
    <property type="match status" value="1"/>
</dbReference>
<dbReference type="Gene3D" id="3.20.20.140">
    <property type="entry name" value="Metal-dependent hydrolases"/>
    <property type="match status" value="1"/>
</dbReference>
<dbReference type="HAMAP" id="MF_00540">
    <property type="entry name" value="A_deaminase"/>
    <property type="match status" value="1"/>
</dbReference>
<dbReference type="InterPro" id="IPR028893">
    <property type="entry name" value="A_deaminase"/>
</dbReference>
<dbReference type="InterPro" id="IPR001365">
    <property type="entry name" value="A_deaminase_dom"/>
</dbReference>
<dbReference type="InterPro" id="IPR006330">
    <property type="entry name" value="Ado/ade_deaminase"/>
</dbReference>
<dbReference type="InterPro" id="IPR032466">
    <property type="entry name" value="Metal_Hydrolase"/>
</dbReference>
<dbReference type="NCBIfam" id="TIGR01430">
    <property type="entry name" value="aden_deam"/>
    <property type="match status" value="1"/>
</dbReference>
<dbReference type="NCBIfam" id="NF006846">
    <property type="entry name" value="PRK09358.1-1"/>
    <property type="match status" value="1"/>
</dbReference>
<dbReference type="PANTHER" id="PTHR11409">
    <property type="entry name" value="ADENOSINE DEAMINASE"/>
    <property type="match status" value="1"/>
</dbReference>
<dbReference type="PANTHER" id="PTHR11409:SF43">
    <property type="entry name" value="ADENOSINE DEAMINASE"/>
    <property type="match status" value="1"/>
</dbReference>
<dbReference type="Pfam" id="PF00962">
    <property type="entry name" value="A_deaminase"/>
    <property type="match status" value="1"/>
</dbReference>
<dbReference type="SUPFAM" id="SSF51556">
    <property type="entry name" value="Metallo-dependent hydrolases"/>
    <property type="match status" value="1"/>
</dbReference>
<keyword id="KW-0378">Hydrolase</keyword>
<keyword id="KW-0479">Metal-binding</keyword>
<keyword id="KW-0546">Nucleotide metabolism</keyword>
<keyword id="KW-0862">Zinc</keyword>
<name>ADD_EDWI9</name>
<protein>
    <recommendedName>
        <fullName evidence="1">Adenosine deaminase</fullName>
        <ecNumber evidence="1">3.5.4.4</ecNumber>
    </recommendedName>
    <alternativeName>
        <fullName evidence="1">Adenosine aminohydrolase</fullName>
    </alternativeName>
</protein>
<reference key="1">
    <citation type="submission" date="2009-03" db="EMBL/GenBank/DDBJ databases">
        <title>Complete genome sequence of Edwardsiella ictaluri 93-146.</title>
        <authorList>
            <person name="Williams M.L."/>
            <person name="Gillaspy A.F."/>
            <person name="Dyer D.W."/>
            <person name="Thune R.L."/>
            <person name="Waldbieser G.C."/>
            <person name="Schuster S.C."/>
            <person name="Gipson J."/>
            <person name="Zaitshik J."/>
            <person name="Landry C."/>
            <person name="Lawrence M.L."/>
        </authorList>
    </citation>
    <scope>NUCLEOTIDE SEQUENCE [LARGE SCALE GENOMIC DNA]</scope>
    <source>
        <strain>93-146</strain>
    </source>
</reference>
<proteinExistence type="inferred from homology"/>
<evidence type="ECO:0000255" key="1">
    <source>
        <dbReference type="HAMAP-Rule" id="MF_00540"/>
    </source>
</evidence>
<feature type="chain" id="PRO_1000211948" description="Adenosine deaminase">
    <location>
        <begin position="1"/>
        <end position="333"/>
    </location>
</feature>
<feature type="active site" description="Proton donor" evidence="1">
    <location>
        <position position="200"/>
    </location>
</feature>
<feature type="binding site" evidence="1">
    <location>
        <position position="12"/>
    </location>
    <ligand>
        <name>Zn(2+)</name>
        <dbReference type="ChEBI" id="CHEBI:29105"/>
        <note>catalytic</note>
    </ligand>
</feature>
<feature type="binding site" evidence="1">
    <location>
        <position position="14"/>
    </location>
    <ligand>
        <name>substrate</name>
    </ligand>
</feature>
<feature type="binding site" evidence="1">
    <location>
        <position position="14"/>
    </location>
    <ligand>
        <name>Zn(2+)</name>
        <dbReference type="ChEBI" id="CHEBI:29105"/>
        <note>catalytic</note>
    </ligand>
</feature>
<feature type="binding site" evidence="1">
    <location>
        <position position="16"/>
    </location>
    <ligand>
        <name>substrate</name>
    </ligand>
</feature>
<feature type="binding site" evidence="1">
    <location>
        <position position="170"/>
    </location>
    <ligand>
        <name>substrate</name>
    </ligand>
</feature>
<feature type="binding site" evidence="1">
    <location>
        <position position="197"/>
    </location>
    <ligand>
        <name>Zn(2+)</name>
        <dbReference type="ChEBI" id="CHEBI:29105"/>
        <note>catalytic</note>
    </ligand>
</feature>
<feature type="binding site" evidence="1">
    <location>
        <position position="278"/>
    </location>
    <ligand>
        <name>Zn(2+)</name>
        <dbReference type="ChEBI" id="CHEBI:29105"/>
        <note>catalytic</note>
    </ligand>
</feature>
<feature type="binding site" evidence="1">
    <location>
        <position position="279"/>
    </location>
    <ligand>
        <name>substrate</name>
    </ligand>
</feature>
<feature type="site" description="Important for catalytic activity" evidence="1">
    <location>
        <position position="221"/>
    </location>
</feature>
<accession>C5BDE0</accession>
<comment type="function">
    <text evidence="1">Catalyzes the hydrolytic deamination of adenosine and 2-deoxyadenosine.</text>
</comment>
<comment type="catalytic activity">
    <reaction evidence="1">
        <text>adenosine + H2O + H(+) = inosine + NH4(+)</text>
        <dbReference type="Rhea" id="RHEA:24408"/>
        <dbReference type="ChEBI" id="CHEBI:15377"/>
        <dbReference type="ChEBI" id="CHEBI:15378"/>
        <dbReference type="ChEBI" id="CHEBI:16335"/>
        <dbReference type="ChEBI" id="CHEBI:17596"/>
        <dbReference type="ChEBI" id="CHEBI:28938"/>
        <dbReference type="EC" id="3.5.4.4"/>
    </reaction>
    <physiologicalReaction direction="left-to-right" evidence="1">
        <dbReference type="Rhea" id="RHEA:24409"/>
    </physiologicalReaction>
</comment>
<comment type="catalytic activity">
    <reaction evidence="1">
        <text>2'-deoxyadenosine + H2O + H(+) = 2'-deoxyinosine + NH4(+)</text>
        <dbReference type="Rhea" id="RHEA:28190"/>
        <dbReference type="ChEBI" id="CHEBI:15377"/>
        <dbReference type="ChEBI" id="CHEBI:15378"/>
        <dbReference type="ChEBI" id="CHEBI:17256"/>
        <dbReference type="ChEBI" id="CHEBI:28938"/>
        <dbReference type="ChEBI" id="CHEBI:28997"/>
        <dbReference type="EC" id="3.5.4.4"/>
    </reaction>
    <physiologicalReaction direction="left-to-right" evidence="1">
        <dbReference type="Rhea" id="RHEA:28191"/>
    </physiologicalReaction>
</comment>
<comment type="cofactor">
    <cofactor evidence="1">
        <name>Zn(2+)</name>
        <dbReference type="ChEBI" id="CHEBI:29105"/>
    </cofactor>
    <text evidence="1">Binds 1 zinc ion per subunit.</text>
</comment>
<comment type="similarity">
    <text evidence="1">Belongs to the metallo-dependent hydrolases superfamily. Adenosine and AMP deaminases family. Adenosine deaminase subfamily.</text>
</comment>